<keyword id="KW-0007">Acetylation</keyword>
<keyword id="KW-0687">Ribonucleoprotein</keyword>
<keyword id="KW-0689">Ribosomal protein</keyword>
<keyword id="KW-0694">RNA-binding</keyword>
<keyword id="KW-0699">rRNA-binding</keyword>
<name>RL9_ESCF3</name>
<organism>
    <name type="scientific">Escherichia fergusonii (strain ATCC 35469 / DSM 13698 / CCUG 18766 / IAM 14443 / JCM 21226 / LMG 7866 / NBRC 102419 / NCTC 12128 / CDC 0568-73)</name>
    <dbReference type="NCBI Taxonomy" id="585054"/>
    <lineage>
        <taxon>Bacteria</taxon>
        <taxon>Pseudomonadati</taxon>
        <taxon>Pseudomonadota</taxon>
        <taxon>Gammaproteobacteria</taxon>
        <taxon>Enterobacterales</taxon>
        <taxon>Enterobacteriaceae</taxon>
        <taxon>Escherichia</taxon>
    </lineage>
</organism>
<comment type="function">
    <text evidence="1">Binds to the 23S rRNA.</text>
</comment>
<comment type="similarity">
    <text evidence="1">Belongs to the bacterial ribosomal protein bL9 family.</text>
</comment>
<proteinExistence type="inferred from homology"/>
<gene>
    <name evidence="1" type="primary">rplI</name>
    <name type="ordered locus">EFER_4256</name>
</gene>
<accession>B7LLY5</accession>
<protein>
    <recommendedName>
        <fullName evidence="1">Large ribosomal subunit protein bL9</fullName>
    </recommendedName>
    <alternativeName>
        <fullName evidence="2">50S ribosomal protein L9</fullName>
    </alternativeName>
</protein>
<sequence length="149" mass="15769">MQVILLDKVANLGSLGDQVNVKAGYARNFLVPQGKAVPATKKNIEFFEARRAELEAKLAEVLAAANARAEKINALETVTIASKAGDEGKLFGSIGTRDIADAVTAAGVEVAKSEVRLPNGVLRTTGEHEVSFQVHSEVFAKVIVNVVAE</sequence>
<feature type="chain" id="PRO_1000126914" description="Large ribosomal subunit protein bL9">
    <location>
        <begin position="1"/>
        <end position="149"/>
    </location>
</feature>
<feature type="modified residue" description="N6-acetyllysine" evidence="1">
    <location>
        <position position="89"/>
    </location>
</feature>
<dbReference type="EMBL" id="CU928158">
    <property type="protein sequence ID" value="CAQ91675.1"/>
    <property type="molecule type" value="Genomic_DNA"/>
</dbReference>
<dbReference type="RefSeq" id="WP_001196062.1">
    <property type="nucleotide sequence ID" value="NC_011740.1"/>
</dbReference>
<dbReference type="SMR" id="B7LLY5"/>
<dbReference type="GeneID" id="93777620"/>
<dbReference type="KEGG" id="efe:EFER_4256"/>
<dbReference type="HOGENOM" id="CLU_078938_4_1_6"/>
<dbReference type="OrthoDB" id="9788336at2"/>
<dbReference type="Proteomes" id="UP000000745">
    <property type="component" value="Chromosome"/>
</dbReference>
<dbReference type="GO" id="GO:1990904">
    <property type="term" value="C:ribonucleoprotein complex"/>
    <property type="evidence" value="ECO:0007669"/>
    <property type="project" value="UniProtKB-KW"/>
</dbReference>
<dbReference type="GO" id="GO:0005840">
    <property type="term" value="C:ribosome"/>
    <property type="evidence" value="ECO:0007669"/>
    <property type="project" value="UniProtKB-KW"/>
</dbReference>
<dbReference type="GO" id="GO:0019843">
    <property type="term" value="F:rRNA binding"/>
    <property type="evidence" value="ECO:0007669"/>
    <property type="project" value="UniProtKB-UniRule"/>
</dbReference>
<dbReference type="GO" id="GO:0003735">
    <property type="term" value="F:structural constituent of ribosome"/>
    <property type="evidence" value="ECO:0007669"/>
    <property type="project" value="InterPro"/>
</dbReference>
<dbReference type="GO" id="GO:0006412">
    <property type="term" value="P:translation"/>
    <property type="evidence" value="ECO:0007669"/>
    <property type="project" value="UniProtKB-UniRule"/>
</dbReference>
<dbReference type="FunFam" id="3.10.430.100:FF:000001">
    <property type="entry name" value="50S ribosomal protein L9"/>
    <property type="match status" value="1"/>
</dbReference>
<dbReference type="FunFam" id="3.40.5.10:FF:000001">
    <property type="entry name" value="50S ribosomal protein L9"/>
    <property type="match status" value="1"/>
</dbReference>
<dbReference type="Gene3D" id="3.10.430.100">
    <property type="entry name" value="Ribosomal protein L9, C-terminal domain"/>
    <property type="match status" value="1"/>
</dbReference>
<dbReference type="Gene3D" id="3.40.5.10">
    <property type="entry name" value="Ribosomal protein L9, N-terminal domain"/>
    <property type="match status" value="1"/>
</dbReference>
<dbReference type="HAMAP" id="MF_00503">
    <property type="entry name" value="Ribosomal_bL9"/>
    <property type="match status" value="1"/>
</dbReference>
<dbReference type="InterPro" id="IPR000244">
    <property type="entry name" value="Ribosomal_bL9"/>
</dbReference>
<dbReference type="InterPro" id="IPR009027">
    <property type="entry name" value="Ribosomal_bL9/RNase_H1_N"/>
</dbReference>
<dbReference type="InterPro" id="IPR020594">
    <property type="entry name" value="Ribosomal_bL9_bac/chp"/>
</dbReference>
<dbReference type="InterPro" id="IPR020069">
    <property type="entry name" value="Ribosomal_bL9_C"/>
</dbReference>
<dbReference type="InterPro" id="IPR036791">
    <property type="entry name" value="Ribosomal_bL9_C_sf"/>
</dbReference>
<dbReference type="InterPro" id="IPR020070">
    <property type="entry name" value="Ribosomal_bL9_N"/>
</dbReference>
<dbReference type="InterPro" id="IPR036935">
    <property type="entry name" value="Ribosomal_bL9_N_sf"/>
</dbReference>
<dbReference type="NCBIfam" id="TIGR00158">
    <property type="entry name" value="L9"/>
    <property type="match status" value="1"/>
</dbReference>
<dbReference type="PANTHER" id="PTHR21368">
    <property type="entry name" value="50S RIBOSOMAL PROTEIN L9"/>
    <property type="match status" value="1"/>
</dbReference>
<dbReference type="Pfam" id="PF03948">
    <property type="entry name" value="Ribosomal_L9_C"/>
    <property type="match status" value="1"/>
</dbReference>
<dbReference type="Pfam" id="PF01281">
    <property type="entry name" value="Ribosomal_L9_N"/>
    <property type="match status" value="1"/>
</dbReference>
<dbReference type="SUPFAM" id="SSF55658">
    <property type="entry name" value="L9 N-domain-like"/>
    <property type="match status" value="1"/>
</dbReference>
<dbReference type="SUPFAM" id="SSF55653">
    <property type="entry name" value="Ribosomal protein L9 C-domain"/>
    <property type="match status" value="1"/>
</dbReference>
<dbReference type="PROSITE" id="PS00651">
    <property type="entry name" value="RIBOSOMAL_L9"/>
    <property type="match status" value="1"/>
</dbReference>
<reference key="1">
    <citation type="journal article" date="2009" name="PLoS Genet.">
        <title>Organised genome dynamics in the Escherichia coli species results in highly diverse adaptive paths.</title>
        <authorList>
            <person name="Touchon M."/>
            <person name="Hoede C."/>
            <person name="Tenaillon O."/>
            <person name="Barbe V."/>
            <person name="Baeriswyl S."/>
            <person name="Bidet P."/>
            <person name="Bingen E."/>
            <person name="Bonacorsi S."/>
            <person name="Bouchier C."/>
            <person name="Bouvet O."/>
            <person name="Calteau A."/>
            <person name="Chiapello H."/>
            <person name="Clermont O."/>
            <person name="Cruveiller S."/>
            <person name="Danchin A."/>
            <person name="Diard M."/>
            <person name="Dossat C."/>
            <person name="Karoui M.E."/>
            <person name="Frapy E."/>
            <person name="Garry L."/>
            <person name="Ghigo J.M."/>
            <person name="Gilles A.M."/>
            <person name="Johnson J."/>
            <person name="Le Bouguenec C."/>
            <person name="Lescat M."/>
            <person name="Mangenot S."/>
            <person name="Martinez-Jehanne V."/>
            <person name="Matic I."/>
            <person name="Nassif X."/>
            <person name="Oztas S."/>
            <person name="Petit M.A."/>
            <person name="Pichon C."/>
            <person name="Rouy Z."/>
            <person name="Ruf C.S."/>
            <person name="Schneider D."/>
            <person name="Tourret J."/>
            <person name="Vacherie B."/>
            <person name="Vallenet D."/>
            <person name="Medigue C."/>
            <person name="Rocha E.P.C."/>
            <person name="Denamur E."/>
        </authorList>
    </citation>
    <scope>NUCLEOTIDE SEQUENCE [LARGE SCALE GENOMIC DNA]</scope>
    <source>
        <strain>ATCC 35469 / DSM 13698 / BCRC 15582 / CCUG 18766 / IAM 14443 / JCM 21226 / LMG 7866 / NBRC 102419 / NCTC 12128 / CDC 0568-73</strain>
    </source>
</reference>
<evidence type="ECO:0000255" key="1">
    <source>
        <dbReference type="HAMAP-Rule" id="MF_00503"/>
    </source>
</evidence>
<evidence type="ECO:0000305" key="2"/>